<dbReference type="EC" id="6.3.2.-" evidence="9"/>
<dbReference type="EMBL" id="DF938583">
    <property type="protein sequence ID" value="GAM84991.1"/>
    <property type="molecule type" value="Genomic_DNA"/>
</dbReference>
<dbReference type="STRING" id="1603295.A0A0S6XHH0"/>
<dbReference type="OrthoDB" id="416786at2759"/>
<dbReference type="Proteomes" id="UP000054361">
    <property type="component" value="Unassembled WGS sequence"/>
</dbReference>
<dbReference type="GO" id="GO:0005737">
    <property type="term" value="C:cytoplasm"/>
    <property type="evidence" value="ECO:0007669"/>
    <property type="project" value="TreeGrafter"/>
</dbReference>
<dbReference type="GO" id="GO:0016874">
    <property type="term" value="F:ligase activity"/>
    <property type="evidence" value="ECO:0007669"/>
    <property type="project" value="UniProtKB-KW"/>
</dbReference>
<dbReference type="GO" id="GO:0031177">
    <property type="term" value="F:phosphopantetheine binding"/>
    <property type="evidence" value="ECO:0007669"/>
    <property type="project" value="InterPro"/>
</dbReference>
<dbReference type="GO" id="GO:0043041">
    <property type="term" value="P:amino acid activation for nonribosomal peptide biosynthetic process"/>
    <property type="evidence" value="ECO:0007669"/>
    <property type="project" value="TreeGrafter"/>
</dbReference>
<dbReference type="GO" id="GO:0044550">
    <property type="term" value="P:secondary metabolite biosynthetic process"/>
    <property type="evidence" value="ECO:0007669"/>
    <property type="project" value="TreeGrafter"/>
</dbReference>
<dbReference type="CDD" id="cd05918">
    <property type="entry name" value="A_NRPS_SidN3_like"/>
    <property type="match status" value="12"/>
</dbReference>
<dbReference type="CDD" id="cd19542">
    <property type="entry name" value="CT_NRPS-like"/>
    <property type="match status" value="6"/>
</dbReference>
<dbReference type="CDD" id="cd19534">
    <property type="entry name" value="E_NRPS"/>
    <property type="match status" value="4"/>
</dbReference>
<dbReference type="CDD" id="cd19545">
    <property type="entry name" value="FUM14_C_NRPS-like"/>
    <property type="match status" value="7"/>
</dbReference>
<dbReference type="FunFam" id="3.40.50.980:FF:000001">
    <property type="entry name" value="Non-ribosomal peptide synthetase"/>
    <property type="match status" value="7"/>
</dbReference>
<dbReference type="FunFam" id="3.30.559.10:FF:000016">
    <property type="entry name" value="Nonribosomal peptide synthase Pes1"/>
    <property type="match status" value="4"/>
</dbReference>
<dbReference type="FunFam" id="3.30.559.30:FF:000002">
    <property type="entry name" value="Nonribosomal peptide synthase Pes1"/>
    <property type="match status" value="4"/>
</dbReference>
<dbReference type="FunFam" id="3.30.559.30:FF:000005">
    <property type="entry name" value="Nonribosomal peptide synthase Pes1"/>
    <property type="match status" value="1"/>
</dbReference>
<dbReference type="FunFam" id="3.30.300.30:FF:000015">
    <property type="entry name" value="Nonribosomal peptide synthase SidD"/>
    <property type="match status" value="12"/>
</dbReference>
<dbReference type="FunFam" id="3.30.559.30:FF:000003">
    <property type="entry name" value="Nonribosomal peptide synthase SidD"/>
    <property type="match status" value="6"/>
</dbReference>
<dbReference type="FunFam" id="1.10.1200.10:FF:000005">
    <property type="entry name" value="Nonribosomal peptide synthetase 1"/>
    <property type="match status" value="8"/>
</dbReference>
<dbReference type="FunFam" id="3.40.50.12780:FF:000014">
    <property type="entry name" value="Nonribosomal peptide synthetase 1"/>
    <property type="match status" value="11"/>
</dbReference>
<dbReference type="Gene3D" id="3.30.300.30">
    <property type="match status" value="12"/>
</dbReference>
<dbReference type="Gene3D" id="1.10.1200.10">
    <property type="entry name" value="ACP-like"/>
    <property type="match status" value="13"/>
</dbReference>
<dbReference type="Gene3D" id="3.30.559.10">
    <property type="entry name" value="Chloramphenicol acetyltransferase-like domain"/>
    <property type="match status" value="17"/>
</dbReference>
<dbReference type="Gene3D" id="3.40.50.12780">
    <property type="entry name" value="N-terminal domain of ligase-like"/>
    <property type="match status" value="12"/>
</dbReference>
<dbReference type="Gene3D" id="3.30.559.30">
    <property type="entry name" value="Nonribosomal peptide synthetase, condensation domain"/>
    <property type="match status" value="17"/>
</dbReference>
<dbReference type="InterPro" id="IPR010071">
    <property type="entry name" value="AA_adenyl_dom"/>
</dbReference>
<dbReference type="InterPro" id="IPR036736">
    <property type="entry name" value="ACP-like_sf"/>
</dbReference>
<dbReference type="InterPro" id="IPR045851">
    <property type="entry name" value="AMP-bd_C_sf"/>
</dbReference>
<dbReference type="InterPro" id="IPR020845">
    <property type="entry name" value="AMP-binding_CS"/>
</dbReference>
<dbReference type="InterPro" id="IPR000873">
    <property type="entry name" value="AMP-dep_synth/lig_dom"/>
</dbReference>
<dbReference type="InterPro" id="IPR042099">
    <property type="entry name" value="ANL_N_sf"/>
</dbReference>
<dbReference type="InterPro" id="IPR023213">
    <property type="entry name" value="CAT-like_dom_sf"/>
</dbReference>
<dbReference type="InterPro" id="IPR001242">
    <property type="entry name" value="Condensatn"/>
</dbReference>
<dbReference type="InterPro" id="IPR020806">
    <property type="entry name" value="PKS_PP-bd"/>
</dbReference>
<dbReference type="InterPro" id="IPR009081">
    <property type="entry name" value="PP-bd_ACP"/>
</dbReference>
<dbReference type="InterPro" id="IPR006162">
    <property type="entry name" value="Ppantetheine_attach_site"/>
</dbReference>
<dbReference type="NCBIfam" id="TIGR01733">
    <property type="entry name" value="AA-adenyl-dom"/>
    <property type="match status" value="12"/>
</dbReference>
<dbReference type="NCBIfam" id="NF003417">
    <property type="entry name" value="PRK04813.1"/>
    <property type="match status" value="12"/>
</dbReference>
<dbReference type="NCBIfam" id="NF004282">
    <property type="entry name" value="PRK05691.1"/>
    <property type="match status" value="33"/>
</dbReference>
<dbReference type="PANTHER" id="PTHR45527">
    <property type="entry name" value="NONRIBOSOMAL PEPTIDE SYNTHETASE"/>
    <property type="match status" value="1"/>
</dbReference>
<dbReference type="PANTHER" id="PTHR45527:SF12">
    <property type="entry name" value="NONRIBOSOMAL PEPTIDE SYNTHETASE IVOA"/>
    <property type="match status" value="1"/>
</dbReference>
<dbReference type="Pfam" id="PF00501">
    <property type="entry name" value="AMP-binding"/>
    <property type="match status" value="12"/>
</dbReference>
<dbReference type="Pfam" id="PF00668">
    <property type="entry name" value="Condensation"/>
    <property type="match status" value="17"/>
</dbReference>
<dbReference type="Pfam" id="PF00550">
    <property type="entry name" value="PP-binding"/>
    <property type="match status" value="13"/>
</dbReference>
<dbReference type="SMART" id="SM00823">
    <property type="entry name" value="PKS_PP"/>
    <property type="match status" value="12"/>
</dbReference>
<dbReference type="SUPFAM" id="SSF56801">
    <property type="entry name" value="Acetyl-CoA synthetase-like"/>
    <property type="match status" value="12"/>
</dbReference>
<dbReference type="SUPFAM" id="SSF47336">
    <property type="entry name" value="ACP-like"/>
    <property type="match status" value="13"/>
</dbReference>
<dbReference type="SUPFAM" id="SSF52777">
    <property type="entry name" value="CoA-dependent acyltransferases"/>
    <property type="match status" value="34"/>
</dbReference>
<dbReference type="PROSITE" id="PS00455">
    <property type="entry name" value="AMP_BINDING"/>
    <property type="match status" value="12"/>
</dbReference>
<dbReference type="PROSITE" id="PS50075">
    <property type="entry name" value="CARRIER"/>
    <property type="match status" value="13"/>
</dbReference>
<dbReference type="PROSITE" id="PS00012">
    <property type="entry name" value="PHOSPHOPANTETHEINE"/>
    <property type="match status" value="8"/>
</dbReference>
<gene>
    <name evidence="7" type="primary">frbI</name>
    <name type="ORF">ANO11243_029940</name>
</gene>
<keyword id="KW-0436">Ligase</keyword>
<keyword id="KW-0596">Phosphopantetheine</keyword>
<keyword id="KW-0597">Phosphoprotein</keyword>
<keyword id="KW-1185">Reference proteome</keyword>
<organism>
    <name type="scientific">Dothideomycetidae sp. (strain 11243)</name>
    <name type="common">Fungal sp. (strain No.11243)</name>
    <dbReference type="NCBI Taxonomy" id="1603295"/>
    <lineage>
        <taxon>Eukaryota</taxon>
        <taxon>Fungi</taxon>
        <taxon>Dikarya</taxon>
        <taxon>Ascomycota</taxon>
        <taxon>Pezizomycotina</taxon>
        <taxon>Dothideomycetes</taxon>
        <taxon>Dothideomycetidae</taxon>
    </lineage>
</organism>
<evidence type="ECO:0000255" key="1"/>
<evidence type="ECO:0000255" key="2">
    <source>
        <dbReference type="PROSITE-ProRule" id="PRU00258"/>
    </source>
</evidence>
<evidence type="ECO:0000256" key="3">
    <source>
        <dbReference type="SAM" id="MobiDB-lite"/>
    </source>
</evidence>
<evidence type="ECO:0000269" key="4">
    <source>
    </source>
</evidence>
<evidence type="ECO:0000269" key="5">
    <source>
    </source>
</evidence>
<evidence type="ECO:0000269" key="6">
    <source>
    </source>
</evidence>
<evidence type="ECO:0000303" key="7">
    <source>
    </source>
</evidence>
<evidence type="ECO:0000305" key="8"/>
<evidence type="ECO:0000305" key="9">
    <source>
    </source>
</evidence>
<sequence>MASEHTSDGLRKLLLDLALEVLEIEPTRFRPEKSFLELGGDSLSAIEFMAKCRANDIDVDVGIILRAKNVADLVDKIIEQQLEEEEEDDDSLDNESERDHSQKDLMPSHLLELSDALLEKVIKPTNVEADLRAAIHCISPCLSMQEGCLISHAIDPEAYQCRFVLKITSTNPTNLFNAENLAEAWRRVVARHPSLRTSFMESQNRPGKFDQIIWKSVRPQISICQDVSQVVAPTTPPKLDYSQPPHHLVLAQGSAADLYVRLDISHAIVDGQSTEVLLHDLWQAYQGRLPQGEAIAVTDILKLHNSSTAADAAAYWSDYLSKAQESYLPMKVNQAASTNLSSIKRTIKVAQDDLEAFCAKRGVTIANLCQMAWGLVLRSFTNSDKVCFSYVTSGRQVPLVGINEAVGAFITTLIQRLDFNRSKDIAEVLTQVNDDFIQSVPYQHLSFNDIGLKSARQWGNSILSMHRPLPTQVYANSGIGFEPITRTTATDYDVSLNIDIFTDSIVLNMDFWLSKMSEEDAHSTLKVYEKAILFVLNNSDKMTRDFLPLTEDDRATIHARNQKIPSKVDKCVHDLVLETISKQPDAVAVQAWDGQWTYSELNEKATRVAEFLISLGTGPEVKVGLCMEKSRWAPIAMLGILKAGGVVVPMGTQHPLSRVQTVLEDTKAIAILTDKEQETRLGGLKVRKITIDAEIMSNANGSILANSTKVSPDNAAWIVYTSGSTGTPKGVVLEHAALCSSITGHSAAFQLDNKTRTLQFAAHTFDAAIQDVFTTIFVGGVICIPSEHDRMNALERVMDELKVNFATLTSTVAGLLRPQAIPSMETIVLVGEAVKPAVVEAWLPHSRVLNAYGPSECSIHSTCSKPITDKRDALVIGFPLTDCLWVTDPDNYNRLSPIGASGELLIEGPILARGYLNDLEKTGKAFVVDPDFVHELGLPKGRRMYRTGDLVRQNSDGSLTYLGRRDTQVKIHGQRVEIGEIEYHITRHSSVEEAVVVKVSGGPMDGRLVGAIVLKNFVSGTYHGTSVKEIDMGQHASAMLQVSDVQLHLSERVMQYMVPTFWIPVNSLPVNASGKIDRKVVGTWMADLDMDTVERLSGTGEEEEKEQTPATAIEKELRRIWSETLNIPLRNISYRNSFLSLGGDSITAMQVVSICRSVDISVSVKQVLECRALSELALVARSTTESVDDLSVVPDGEFTLAPIQQQYFDLVAADGLEARSSNRFNQSVHLSVRRPIGVAELARSMEAVVAKHAMLRARFVPDTGSGWSQRIENQLVGSYRLKVSQVESMEQVQSTIYDAQDSLDLQNGPVFSADLISIKDQQLVSMTAHHLVVDLVSWRIIVRDLEQLLSDRTLQNTRSLSFPTWLQLQRDHTEEKISESTAALPFDVSPADLKYWNLQPGTLTVKDRIIEMIEVDELTTSLLFGAANNAMRSEPVEILLAALFHSFANTFIDRPVPAIFNEGHGREPWSDELDLADTVGWFTTMTPLQVTNTTGDIVDTLKQTKERRRRIPEKGMTAFAAQYFSGKSESQVMEILFNYEGRYQQLENEDGLFRLAQPSDLGDADQSLSVGQDVKIQAAIDINASVSSKKLQLRIGFSKQSRRQDDMKQWMVACGETITHLVKRLAHMAPMMTAGDFTTATLTEDDVMFLEQTYLPEIGLNIPTDVEDVLPCTPIQQGILFSQENSKSTYKVRQLVEVLPRDASRPVSVDQLVKAWRTVIRQHSIMRTIFVDSLPNQQRFHQVVLKEVDAVADIHILQNTQNRSLHDILAEQPEFDYRGKERPPHRFTIITDISGKTFAHFEISHALVDASSIELLVSDLFAAYGGMPSGKASHYGEYVAFLESKPITDDLIYWKSLLEGAEPCKLPLASIDNATTTGSFTTRKHVGRQLTDLEELQTFRKEHEITIATLFQLAWSLVLKSRTGSSKVSFGYLSSGRDVPIRDVEGLVGPMVNLMICHNHLDQDESVIAAARKIQTKFLDSFAHQRVPLDAIQHSLQLSGQALFNTTLSYKNSAASDSNAASSISFNRLEAEDPTEYDINIDITAGKTDIAVTLQYSPETLAQSSADELLQQLVEIVQMLCHNTETSLGNLSLLTNNDVTSIKAWNAGPFLSDDRLLHHLIQEAAKEYTNASAICAWDGEVTHDELNALTDRLAHHLRLELGVGPEKTVGVCMDKSKWAVVSMLAILKAGGAVLPLGVQLPVARIEFLLRDASAVAVLANQQHATRLRDVAPKALVIDEQLFSEIPELTGPACTDVKADSAAWVIYTSGSTGMPKGVVLQHSALSTSLLAQGPALGITKGTRTLQFAAYTFDVSIGETFATLIRGGTVCIPSEDRRVNNLAGTAADMRVNLAILTSTVAGLLEPAEVPLLSTIVLAGEAASPAVVDKWLGHAAVYNAYGPAECSVLASSSKPMARKEDAPVIGYPLSGCFWVADPTDYNSLVPIGVIGELLVEGPQLAREYLGDEERTKTSFIQDPEFVTKLNLGHGHRMYRTGDLVQQNLDGSLIYIGRRDNQIKIRGQRVEVGEIEYLVTSHPAVKDAVVILADKGLLKNKLIGVIATHDSIKDGGYGSSVEIADEHHRQTASPYTAEIRRLLSQNIPAYMIPTLWVILATIPINSSGKVDRAQIKQSLFTMDPKALGLVLASNTQDKLRTVPATALEKQLLTAWSKTLNLVPEQIGYGQAFTAVGGDSVTAMQVVSELRKVGVTFSVRDVLQSQNIAELALKAKSTTAHQAEETPYEPFALSPVQQMFFDDIAADGLVSAGEHRYNQGFWLSVERPTGVDELARAIEILVGRHAMLRARFFHDGEHGWKQRIQEELQGSYRFRAMQVESDDDLAAISNASQKSLDLEHGPVFSVDVVNRESQGQMMYVVAHHLVVDLVSWRIILRELEELLRNRTMSEQVPLSFRSWNHLQSQYSQGLSDVSATLPYSVPSADWSYWGLEQGYKAGDQIQKSVVLEEAITNKLFGDSNRALRTEPVEILLAALFYSFQATFDNRPVPAIFNEGHGRETWDESVDLSETVGWFTIMTPLACAEEHSDIVDLLAQTKDQRRRIPSRGLPYFTSRFLTEEGKRSFVDHRQMEILFNYQGRYQQTESKDALFRPIDLSNLTTKASAPAVGSLVKQTAVFDIDVSRAVDSTHVAFRFSQHISRQDDIARWMLKFQMSVTELLHRLEQMEIRVTSSDFPLTQLTRKDLMALQQTSSSLPGLSSLDNIQDIYPCSPTQQGILISQSKNPEGYQIRQFIKISGMGGKPVDIAVIKCAWQRVINRHSILRTIFIDWLPSQLSYHQLVLKGWTADVPIIACQDESAIKTHIKGLAELKYGDNKLPHEFTLYQTETGEVYGFFQMSHTIVDAWSIDLIVRDLVAACDREAKFMPAPRYGDYISYLKEDTSDKDIKYWTKLLGNVEPCHLQIEGQDSKSENESAFEIKSSIEDLTAFRGLQEKQGITSASLLRFAWAVVLSAYTNSSQVDFGFLTHGRDVPVSGIENLAGPTINMSVCHLRIDSGSASLDGIKKSQDLFLEGLEHQRSSLADIQHHLKLSNQALFNTTMSYRQATSADALKSSSIVIESVYAENPTEFDINVNIVAAQDRIDVELHYKLSAVSHTAAQRLLETLVHVADQLARQTVAKLDDLIMMSPEDLNKIRTRNALVPSRLHSFVHELVAEKTFTQPHAPAVAAWDGDMTYQALDAVSQTLAGYLASLGVGPETMVGVCMGKSKWAVVSMLAILKAGGTVVPLGVNAPLSRIEHIVRDTAATIVLVDVAQADRLATIASNIIDVNDDLIDNLPACSTPPCAAISPDNAAYVIFTSGSTGTPKGVILEHGALCTSLRAHGKAFSLDAHSRVLQFAAHTFDAAIQDIFTTLAFGGCVCIVSEDERMNNLAAGMRRTGVNFAALTSSVAALIHPDDTPDLKTIILVGEAVSEVVVKRWIQSSRLINAYGPAEGSICTTCTAPMRSDFEASNIGYPVAGCVWVTDPADYNRLCPPGVPGELLIEGPLLARGYLNDAEKTAAAFVREPKFLKQIGISNRTGRLYRTGDLVRQNPDGSLTFMGRIDSQIKIAGQRVETGEIENQIARLLPTVRQVSVDLIQDPSRSGARTLVAAIEIHTNDTKPSQQSLEPVKYSRGLHKQIEALQDSLAEVLPSYMVPKIFVPLVTLPVGATGKLDRRALKQYLESLDNSELRAFVANEAVKEPPSNDAERMVQSLWAKIFKRPTSAIGINDHFFHLGGDSVLAMQMIAAAHEEAMDLTVADIFRMPRLHQLAAIVTQRGFKAESSESMNPAPFNLAQHLLSSVSEERDRQFAELAEQCSIGVEDIEDVYPCTPLQENLIASTLHNAEAYIARRVFRLRPEVATDRFMSTWTQLSEMQPILRTRILFTTLLQPVQVVVRKSVSWNTAESLQQYLDTDRKQPIGEGEALCRLALIDEGDRYFVWTMHHSIYDGWSTSKMLEVLSNLLEEKPVSPAVPFSRFVKYVAVQDAETTQNFWRQQLDGVVSATRFPALPSASYKPRPTKKASLTLTATRQPGQVTTSIALRAAWAKLVATYTNTDDLVIIEALSGRNAPVSGILDILAPTVTTVPVRVRLQPQQTIRKVLADLQQQSADMIPFEQTGLQNIKRIAPGAGSDLGSEHLFVVQTALEQASKDNTGPFDRVLDADVPLDYALLMECTMDLTRDTVDVQASFDEAVMSADQIEMMLFHFQQIFEQILAHGTGLEEETEKGETMGGIDLLSKQDMDLIGSWNAKPYQALDACLPAQVTEAASTRPDAQAVCAWDGAMTYAELEQQAGRLAHYLSGRNVGPEIKVGVCMAKSKWAVVSMLAVLKAGGVVVPLGADHPLLRIQHMIRDTGMDLILVDSAQAERLASTGPDLVIVSEVFVDSSLGQETFSRESINPESAAWIVYTSGSTGTPKGVVLTHKSLCTSIKAHGTAYGTSSGTRMLQFAAHTFDAAIQEVFTTLIFGGCVCIPSGDDRVNDLIRVICDMDVSLAALTPSVAGMILPSSVPSLKTLILIGEAVTSAVLSKWIGAITVFNGYGPTECSIYTTCKRMESVKDLGNIGSPLGGRVWVTNVTNYHQLCPVGAPGELLVEGPILAREYLNDTPRSSASFVENPGFVKRFGLEGQRMYRTGDLVRQNLDGSITILGRLDTQAKLRGQRLEATEIENHIIQSQSGIQSSVVSIVQLEGATTEPVLVAAIEFSSGSEFTKQEKQNDGLIESSDVLRAWFQKTQESLYQTLPAYMVPKIYIAMERLPLNTSGKLDRPKVRQLIESLHSDTLASYSSAGSNTVEPATIMERQLQKLWASVLNKPQASVGADDHFFQIGGDSVVAMRLVASARQEQIHLSVAQIFKHPRLCDLASHIDHHTLLEETGDLAPFALWLGEDQAESRSSAMQKLASQCDVAVEQIEDIYPCTPLQEGMMALTMQNPRAYVFQSVFRLDDTLQSERLVAAWDKLVDIVPILRTRIVALADSRSLQCVIREPVQWKKSNSLKDYLRQDSQDIIKSGSRMSRCALIEGEKSERYFVWTAHHGLYDGWSRMRMMELLSKIYNSETLPTLPPMSRFLSYLGGSSQADMKTFWQNQLANLAVAKFPALPHATYQPNVDCIAKRQLIGQPANSSVTTSVALRAAWAITVATYTSSEEALLAVALSGRTAPVEGILDLLAPTITTVPVRIRIPHSRTVRELLEEVQKQATDMIPYEHAGLQNMPQLVDDSSVLASLGHLFIVQSTLDGVSVRGHVAPEKTLGLHAEEANFTGLDSYALNVECTMLNEDKIHVDARFDKNVVSEKQVERVLDSFATVFAQLCDSSAAETLVQDVVVIGEKDAQAIRAENAVVTPTHERCIHDLVMDSTLKYPNEPAVHAWDGGFTYQQLDAAATRLALYLSQQGVGPEVKVGFCMDKSKWAVVSILAILKAGGAVTPLGVQHPLPHIEKILSSTKATIILADAQQASRLSGLAAKSVVVDGKLLESLPGSVSGQTVCKVVTPDNTAWVIHTSGSTGTPKGVLLHHSQLSTSFKHQTVAFGIGQDTRTFQFSAFTFDVSISDVCLTLYVGGCVCLPSESDRMNDLEKTARDMEVNLLMITSTVAGLIQPTNVPSAKTLVLTGEAIAPNVVTQWLGHATILNAYGPAECSVDSCSVAFTSPAMASNIGYTTAACFWVVDQLNPHRLVPVGTIGELLIEGPLVSHGYLNDPEKTSQSQMVGPAFFKQLGLEQSRGRIYRTGDLVRQNADGSYEYLGRRDSQMKVHGQRVEAAMIEELIVRLLPDAHVSLVDLVLFGDGKADSTLVASIEFKTDSIYQQHVTSSGLLAATDELREALYHVRTSLADSIPIYMVPSVFVPFARLPTNMSGKLDRKALQQIYKTLGQEELDLYAPQAGEAAGAQPSTTAEIKLQALWATVLRKPSAQYSTRDHFFQSGGDSVSAMRLVAAARQEGLQLAVTDIFNNPRLEDMAKIVEEHVEEEELVDVAPFSLWEADIPTPEQRKSELADLAAQCKVATDNIEDVYPATPLQEGMMAITMQSPRAYVSQVVYRLDKEMDLDRLIRTWQRAEQIAPILRTRIVARPEAASVQVVIREQSEWSFGNDLEAYLAQDKKSPVTFGGPLSRFALITSKQKSERYFVWTCHHSLYDGWSRNRIMDAVARAYTGEEVGPSTPVTRFLQHLGNAGEAETSKFWNTQLDGLTATKFPALPHSGYQPYVKSVVSQRVRDTSINGVVTTSVLLRAAWAIVVAAQTGNKDVLLTVSLSGRTVPVPGILDMLAPTLTTVPVRLRVEREQTIAAFLREAQKQATDMMPFEHTGLQGIRRLLPKNAAPLDPGHLFVVQTSLDKDDGSGSDTFGLTPMDPEIDGFDSYALNISCTVLEDEQQVEIEARFDEQVLSQGRTTALLERFAKVYQQLSHLATANAGAGACVGDISTLCQSDIAQLKDWSARASYDKAEHCLHTLVHEATIKYATSTAIEAWDGSMTYAELESAADRLAQHLASLDVGPETMVGMCMDKSKFAAVAFFAILKAGGVCVPLGVQHPVSRVEHIVQDAGATVLLVDKQQAERLNDMESDAKVITVEEDFLSRLPQSNGFVCHNVTPDNAAWIIYTSGSTGTPKGVVLQHSAIVSAMLGHNAAFGLNSKSRVLQFAAHTFDLLISEIFSTLLCGGTICIPSEETRVSNLAQTAKAMGVNFTWLTSTVASMLTPQELPDLKTLILIGEAASAAVVETWLGHATVLNAYGPSECSIHSSCSKSMVKKEDTPVIGFPVCGNFWVVDAEDYHRLAPVGGVGELLIQGPHLAREYLKDEAKTAAAFVNNARWASELGITHSTQKMYRTGDLVQQNPDGSLTYLGRRDTQIKIRGQRVEVGEIEHHITQHPAVWHAAIVRPSTGPLAGRLAAVVVLHHSAAGNGYSSDVLPLEAELQMANAVTQEVQSFLTERVMQYMVPSTWIPVAALPMNLNRKTDLGRLTRWVAELDEKALTAYQTEAEDDELVSARGTAMEEQLRTVFSRILNVSESRTRLDRSFLSLGGDSVTAMQVVAQCRRLGIQLSVRDVIQSKSISQLALLASTDESEVAHDAVSYEPFALAPIQQMFFDQVASDGMNVMGENRYNQSVCVRLNQAIELSSLQAALDAVVDKHAMLRARFQVDKQSWTQRILETVQGSYRFQTVTAGSEDEIFDILETAESALDIENGPVFSVTVINAPGRQLVFLVAHHLVIDLMSWRIILTDLAELLQNGGQDGKYTLDRSLSFPQWSRLQAEYSHTIKSLDSVLPFDVPAADWAYWGLSAGDFVTRDKIHEHVEISKQITELLLGEGANSALKTEPVELLLAALFQSFHKTFPNRLVPAIVNEGHGREPWDSSVDLSETVGWFTTMTPLHVPVDSQSYDVVETLKQTKERRRQTPGRGLPYFTARYLTKEGRTKFADHQMMEILFNYQGQYQQLERDDTLFSLETLGGRGQPSRVGQNVRELAVFDVAVTVSQGPLHVSIGFSKNIRRPKAVQDWLTAYSKTLEELTTQLVSLAPTRTSSDFPLASLSQQDIDAIATENLSSTGLGFNDVEDVFPASPMQQGILLSMSKNPGTYYVQQTCEFIPKADVKYDTARLASAWQLVVDRHAILRTFFTDALPDQHAYHQIVLSAWTADVQIVKCAHQTEVQSQIGARAQQAFAADQPPHRFTVYEVGDESLYGHFEISHALVDASSVQLLVHDLLRAYDGSLPAAQGPRYSSYISYLQERSPEEDLKYWTSVLGDVEPCQVKTVTFGPAQPIDERPQNIAAEIENLEILQRFGEAHGVTLATLFQLAWAMVLGRHTGLQQVCFGYLLNGRDVPVAGIEEMVGPMINMMVCAVSLDNKELAVPEAAQLVQKQFLEGFEHQRTSLGDIQHAFKLSGQALFNSVLNYKAAQSTDGAQTTSLSIAGKGSEDPTEYDISVNVTKTTDRISLSLQYAQAEVSPALAQRLLDGLLQAVHTLAGSDASQRMRNISLASVKDVAKFREWNTHTPPRVESTVHALVQKSVHARPDATAICAWDGEMSYGELDAAASRLASRLVDDHGIGPEAKVGLCMDKSKWVVVAMLAILKAGGAVLPLGVQHPLERIAHIVRETEAKVVLVDEGQEKRLAEMDVSTLVVDEALVAGVSDALDSKTQTSSPDNTAWIIYTSGSTGTPKGVVLQHGALATSLLAHSKAFGMGVHTRSLQFAAHTFDASIQDTMTTLTIGGCICIPSETERMNSLSAAVARMGANCANLTTTVVGLLHPSEVPSLKTIIFGGEAVLPSLVDLWAPHATLINSLGHTECSINSSFSQPMTHGWQAPGIGKAICGSFWVADQVDFNQLVSIGSVGELLIESPQLAKEYLRDSAKTAAAFVTDPDFVHQLGFTKGRRMYRTGDLVRQLEDGTLTYVGRRDTQVKIRGQRVEIGEIESTVLAVLPEVRSVVVNLIKRGDSQQTLSVAVEFVAENTFLEGEVNTDTGLIAPSKELLEAFGLLRDRLTEVLPLYMVPSIFVPLVKLPLNASGKLDRRATQQLVESLDDATIAAYSSSAAKVQPATDAERQLQTLWAGVLDKDVNAIGATDHFFQLGGDSVVAMRLVAAARQENVQISVADIFAHPRLRDLAKTIQDSETADEEGDAAPFALWEESLDMANSQQRQQELIKLANECAVEVDQIEDVYPCTPLQEGFMALTMQNPRAYVFQSCFELDSKIGTDTLISAWEQLMDVVAILRTRIVALPDSQSLQCVVREKLPWTFSNKSLDDFLASDNQTPMTSGSRLCRCAIVEEPQDNKRYFVWTVHHGVYDGYSRSRMLELLTKILTGHSLPPLTPIPRFLQYLARVDDDEAAAGRFWKAQLANVAAPKFPALPHAAYQPRVDSTARMQIAGPRLAASSGVTTAVAIRTAWAIAVGAHTNSDEALLVVALSGRAAPVDGILDLLGPTLTTVPFRVRIDREKTLSELLTQVQSQASDMIPFEHTGLQKVQVLAGSGPLELGHLLTVQSTLSDERDDPVEALGMHAREVSNLGSDSYALNVECSIWNVENKINVEARFDGNVISQDQVEAILDGFAAIFRQLCDENIAARTKVSEVSVIGEKGLELLRARTDKMPAPYEVLVQNMVTNSLIKNPHAIAVNAWDGDLTYQQLDDAASCLAHHLVRSFGIKPEDKVAFCMDKSKRAVISMLAILKAGGAVTPLGVTHPLQHVQRVINNASSPLVLVDKKQAERFAELSVPTITIDDELLDNLPAYSGPACSSLTVNNTAWVIHTSGSTGIPKGVLLHHSLIATSAKYQAILYGCVGPHTRTLQFAAHTFDMNIFEVFLTLYGGGTICILSEEDRMNDLERQANAMKVTLAFLTSTVAGLLDPTKLPSLHTIVLTGEACTPSVVQQWLDHAVVLNAYGPAEGSVASITKAYTHAEEYSNIGFETAGCFWVVDQLNSDRLVPLGTIGELIIEGPLVSPGYLNDAEKTAQMFIVDPAWVTDLGPTRGRRMYKTGDLVRQNQDGSFEYLGRRDNQMKIRGQRVEAAEVESAIVRLLSGVRTAAVDLVKVGNDADKQVTLVGAFEFVPGTEFTTQGEAEGGLLAPSQPLREALQTLRKDLLQGLPPYMVPSIFVPLVRLPQNLSGKLDRRALRQMLEGLDGTQLTSYASEDSERIEPATPMEMQLAKLWATVLRKPVESVSASDDFFQSGGDSVAAMRLVAAGRQEDVDFTVADIFREPRLSGLAALIQKQIDEEEEYDDSEEEEEDDEEEVREVKGDVAPFALWKEEDGAIADLAAQCGVAISEVEDVYPCTPLQEGLMAITMQSPHAYVSQAVFKLGQDLDIARFKAAWQKTTEKVSILRTRILACRDSASLQVVLRQPIEWKSSGKTLHAYLADDKDTPMTLGAPLCRLAIVENNNERHFVWTCHHSLYDGWSRHRTMDLVSRIYAGSEVGSITPMARFVNHLVKVREVDDTRQYWNAQLRGVTATKFPALPNATYQPLVSTVLRQKMSFTPLPGTITTAVMLRVAWAMVCAAQTSNSDVLLAVSMSGRTIPVPGILDMLGPTLTTVPVRISIDRDEGLHTFLKAAQRQATEMMPYEHTGLQAIRRLLPDGGAKVDLDAGHVFIVQTSLDKTADSVTRPFGSALEPIDINQHGFDSYALNVSCTANDDEQEVEVEVRFDNKVISEYQMQSVLDRLATVLQQIGHLGQAAKVADLQVLSETDKTKIKAWNGICPPRIESCVHMLTHKQAIERPNAPAICAWDGDMTQRELDAAADRLAGHLASLGVGPEVKVGMCINKSKWAVVCMLAILKAGGAVLPLGVQHPIPRIQHILRDTAADVILVDEEQVERLGSLGSETRLVTVDERLVSSLPQPAAPVCSTVGPENAAWVIYTSGSTGVPKGVVLQHFALCTSLVAHGTAFGMGSDTRSLQFAAYTFDASIQDTMTTLVNGGGCICIPSEDERMNSLAAAIRRMKVNCATLTSTVAGLLDPTEIPLLKTIAFGGEAVGPAVVERWGKYANLLNSYGATECSINSSCSKPMTEAHHAANIGWAIPNSGVFWVVDSVDFNRLAPIGAVGELLIEGPQLAREYLNDPVKTASSFVVDPSFIAQLNLGSGRRMYRTGDLVQQQEDGSLIYLGRRDTQIKIRGQRVETGEIESAVRRFLPDVRAAVVNLVQRGGDNALRVLTLAVEFIAESSFQTGETSSTDLLAPSQALREAFADLRDKLLEILPPYMVPSIFVPFVKLPVNTSGKTDRRAVKELIEALTEDALAAYTTTSLTKTEPATGMERHLQALWASVLNKPIESVGANDHFFQSGGDSVVAMRLVAAARQKDIHLTVKDIFSFPRLSDLARETESQGAAEEEDVAPFALWEQSGSNAIDEIARLCAVSSDGIEDVYPCTPLQEGLMAITLQHTNAYVSQRVFKLDASIDVAQFKNRWDSLVELLPILRTRIVPASLSSSLQVVVREAVQWQTASSVEEYLRRDQNTPMTHGGALCRLALITEQDGTNTFVWTIHHSIYDGWSVIKMMGMLDGLSREQTLPEVVPVSRFVKYLTQQDPAASESFWKQQLEGANLTPFPALADTTYKPRPTNRVRFQFSKLKRHGSVVAPAILRAAWAITVATYSGTDDVTLTVALSGRNAPVPGITDIVAPTVTSVPVRIAIQQDQPVAAYLSAIQQQAVDMIPFEHTGLQNIKRIALPAGASFGSGHLFIVQASVDNDRAAATQFSGMTEQFSDQDINMDYPLIVECTTDPEQAMVEVSVSFDNAVLSPDMVDGMMHGFETIFQQLSSVNEQDGTDNSVKISDVQLLGRKDSEMIQSWNKTLVPRATDCLHHTFKRTADKQPERPAICAWDGNFTFHELNQTADRLAAHLIARGVGAEVMVGVCMNKSKWAVVGMLAILKAGGVVVPLGVQHPLARIEHIVKDADIRVVLVDSQQGQRLGDNLAEKIVVDDALLTSLPNPASVKDVRVTADSAAWVIYTSGSTGTPKGVVLEHGSLATSIQAQAAAFGITPETRALQFSAYTFDISIQDMFATLLHGGCVCIPSEEARVVGLAGAIPELKVNSAALTSTVTALLDPAEVPDLKTICFVGEAVNQSVMDKWVHHCSLINAYGPAEASICTTFNQIKKGDAASTIGTPLAGRVWVVDPTNFNRLVPVGAPGELLIEGPLLARHYLNDPIKTEKAFVQAPSFTPHFGISAGTRMYRTGDLVRQNAIGSLTYIGRRDTQIKVRGQRVEIGEIESLVKRLLPSAHTAVVDLITRKEGSEALTVAIEFAAGQPASVANPSGSPLSSPTTALREELSNLRAALFEALPSYMVPSVFVPVVKLPVNASGKLDRGAVRRLLQDLDDEQLGAYVSAEAERKEPSTEMERRIQQLWSAVLKKPATAIGANDHFFQSGGDSVSAIRMIASARGMDVHLTVADVFKHPRLSDLAAAVQGRITDEDEEDPAPFTLWQESSVDDIAEHKAKMHDLASQCDLTAEQIEDVYPATPLQEGLMAITMHSPEAYVSQAVFRLEDNIQVDQLIAAWESLVQMAPILRTRIVSQPGQSSLQIVVKERTSWIRQTSLNIYLAEDKKLPIVSGGELSRTAVVEDKSKRYFVWTCHHSIYDGWSRRKMMDLLARIYNDEVVEGLTPIPRFIRYLTQVSRQDTETFWRAQLEGVAVSKFPTLPHPTYQPRTSSMVRKTFSNASSANVATMSAVLRAAWTLVVNAHTGTDDVLLAVSLSGRTLPVPGILDLIAPTLTTVPVRNKIDRNQSITSFLEQVQSQATAMMPFEHSGLQQIRRMLPGSGTDLDPGHLFMVQTNLDQEDVGAVSDIGLRFEETGVEGFDSYALNILCTTSDGAHGTEVEARFDDKVISHARVEALLNRFDHVFAQLVTETTASQKRIQDIEMVSEQDVAQMRSWNTAASLQPVGMCVHDLIRDSFSSRADEIAICACDGDLTYGELDDASTRLAQYLVSLGVKPEVKVGMSMDKSKWGPIAMLAILKAGGVVVPLNVAHPVMRIEGIVKDTEMTIAVLDAGQADRIGHLVSNAVVLDAAFLDSLPQVNSRFSTTVTPENAAWIIYTSGSTGTPKGVVLQHSALSTSLKAHGAAFGMNSSTRTLQFAANSFDATISEFFATLLYGGTVCIPSEDDRMSDLTNICNSMKVTLAMLTSTVAALLGDIPTLKTLILVGEAASPAVVEQWLSRATILNAYGPSECSIHASCSKPMAAKEDTPIIGYALSGCFWVVDPTDHNRLAPLGGTGELLIEGPQLAREYLNDSAKTSSAFVVDPAFITKLGLGTGRRMYRTGDLVQQREDGSLVYLGRRDTQIKIRGQRVETGEIEHHIAQHSAVLRGAIVRPKTGPLAERLVAFVVLNELAVGSGYSSEVLEISAEDRTHANEVATGVKKYLSDRVMQYMVPGVWITLAALPMNINSKTDLLTLTRWAAEVDDETVATYTNEDTQTASMPGTVQEEQLRSIFSLVLNIPEVRIPLDRSFLSLGGDSVTAMQVISQCRKQGITLTVRDVIQSQSIQQLGQKVKEAVDDNEELNKVSYKPFGLAPIQQMFFEQIVPKQGSGDGENRYNQSVFLKLQQRYALEVIRRAVDAIVDKHAMLRSRFERTADGLWTQRVAQKLDASYSFHNQSVESEDEIYAILDTAEKSLNIENGPVFATRIIDTSDKQLLFLVAHHLVIDLMSWRIILNDFAEALQGRSLAASRSVSFEAWAKAQNEYSKTLQIEKVLPYTVPMADWNYWGVPIGSYLPADKVYQTIDVDEKTAALILGDSNTALQTEPVEILLAALFHSFRRTFLDREVPAIVNEGHGREPWDDSIDLSETVGWFTTMTPLHVAVEKDDLIKTLRGTKEHRRQTPGRGLPYFTSRYMTEQGREAFAHHRAIEVLFNYQGRYQQLERQDAVFSLESLARGVPSPVGANVPELALFDVSVTALASTMQISIGYSRNIRDSALVHEWATNYGNTLKDMTSTLLQMAPTRTPSDFPLATLTDADLSTIEKKNLVPASLVYANVEDILPCSPIQQGILLGQVKAPSTYHIQQTCRFRPKSKHTLETDVKRLSRAWQRVVQRHSILRTFFVDSLASHDSFHQVVLSSWSADVTVVNCTTADEAKAYFATHNPFAANQPPHRFTLVCVGGSDLYGHFEISHALVDASSIELIVNDLLQAYDDKLTVAPGPRYSSYVAHLQKSSAEADLGYWTALLQDAQPCHVRDAPKDLQNVDNTLNKLTSQMTDVATLQRFSEINGVTLATVFQLGWAMVLSSYTNLPQVCFGYLTNGRDVPLAQVDEMVGPMINMMVCTIKLDGETAVSEAAKHAQQSFLEGFDHQRTSLAAIHHALHLSGQPLFNSALSYKREQTVSGQQKPASLALESVASEDPTEYDVSLDVNWSEHSIGLSLVHTRQLSSGLAKSLLDSLVHVVTQLVRGDRTSKLRDISIVGEHDLQQIKAWNTIVPSRMDATLHTLVRDAAHRTPDALAVHAWDGDYTHVELDSTVQRLATRLRALGVRPETRVAFCMDKSRFAPVAVLAILNAGGAVVPLGVQHPVDRVNKIVLDAEAQVMLVDATQAARLVGVVPNMIVVDDKFLHNLPNVDSEQSQPTITPDNAAWVMYTSGSTGVPKGVVLPHGALATSLMVNGKSFGMGPHTRTLQFASYTFDDSIHDIIATLSFGGCICVPSETQRMNSLAEAITSMRANTAAITPTVASLLDPKAVPTLKTVLVGGEAATPQVIELWGPHATLLNLYGPTECSINACVSGPMTIAAHAASIGRPISGSGLVWVVDPANPNALVPLGAPGELLLEGPQLAREYLNDPAKTSAAFILDPAFLKLLGIEDTGRRMYRTGDLVIQRADGSLDYLGRGDGQIKIRGQRVETGDIEAAVRRLMPAARGAVVDLLARGEQRMLIAAVELVDGERADDGVLLAPSSEIREAFSSLKTALRNVLPPYMVPQSFVPLARLPVNASGKLDRRAVTTILSGLTSDVLASYTSDQGDSQLPASADEGALAGAWARVLGVEQSSITRNDDLFHLGGDSISAMKLVQAARELDLHLSVADIFRNPRLADMASVASAARTTQGEEQQYERFSLVETDKTALLAELPALLKVEESTIHDALPVTDFQALCVAGNTIGSGLEMNYFALDGQHAVDLAALKQGCKDLIQQTEMLRTVFVFHQEQMLQVVLAMSNPPVTLHETDEPLDTFTQQLIERQTSQPIRLGQPMASIDIVASPSSATHRIIFRLSHALYEGVALPMIFQRLSTLLAGQALTQGPSFGAFVADLQSRATQEAYSHWRSLLQGAQMPRLSSPPQEQRLFRMAPLPARSVPLPASVQKGITPAMLVKASWAAVLARHTRTPDVVFAETVSGRASASPDVADVLGCCAAILPVRATIRPDTTTAELLASVREQQILSAQNDALGARSIIRNCTEWEKGTRFTSRINHTLAEDGAVALGEEEYKLSPLPPREWMDVAEVSIASFQFGDRVEVGMSFADDELERGVVEGLLRELCDIMVRLASQQEGTVWDSEERSDSLLPSASAVNGTNGSNGDGTDAANGIGQKTGGTGGHAVEKSSGDAEVEKVSTNGHADNNTSAENRQSELSAAIKHATGTVLKNKLKTERSTEALWSGHADVVDYAHVAFLLQRQGWSVLTEDLVRCRSETELIDVVVKREAERVKGNGSAFNGANGHYSNEESVNGNGLHGVQTNGHAGKGVTNGVNGGSKGHI</sequence>
<feature type="chain" id="PRO_0000454567" description="FR901469 synthetase">
    <location>
        <begin position="1"/>
        <end position="15639"/>
    </location>
</feature>
<feature type="domain" description="Carrier 1" evidence="2 9">
    <location>
        <begin position="5"/>
        <end position="81"/>
    </location>
</feature>
<feature type="domain" description="Carrier 2" evidence="2 9">
    <location>
        <begin position="1108"/>
        <end position="1184"/>
    </location>
</feature>
<feature type="domain" description="Carrier 3" evidence="2 9">
    <location>
        <begin position="2654"/>
        <end position="2730"/>
    </location>
</feature>
<feature type="domain" description="Carrier 4" evidence="2 9">
    <location>
        <begin position="4193"/>
        <end position="4269"/>
    </location>
</feature>
<feature type="domain" description="Carrier 5" evidence="2 9">
    <location>
        <begin position="5284"/>
        <end position="5360"/>
    </location>
</feature>
<feature type="domain" description="Carrier 6" evidence="2 9">
    <location>
        <begin position="6375"/>
        <end position="6451"/>
    </location>
</feature>
<feature type="domain" description="Carrier 7" evidence="2 9">
    <location>
        <begin position="7473"/>
        <end position="7546"/>
    </location>
</feature>
<feature type="domain" description="Carrier 8" evidence="2 9">
    <location>
        <begin position="9015"/>
        <end position="9091"/>
    </location>
</feature>
<feature type="domain" description="Carrier 9" evidence="2 9">
    <location>
        <begin position="10110"/>
        <end position="10186"/>
    </location>
</feature>
<feature type="domain" description="Carrier 10" evidence="2 9">
    <location>
        <begin position="11217"/>
        <end position="11293"/>
    </location>
</feature>
<feature type="domain" description="Carrier 11" evidence="2 9">
    <location>
        <begin position="12298"/>
        <end position="12374"/>
    </location>
</feature>
<feature type="domain" description="Carrier 12" evidence="2 9">
    <location>
        <begin position="13383"/>
        <end position="13459"/>
    </location>
</feature>
<feature type="domain" description="Carrier 13" evidence="2 9">
    <location>
        <begin position="14916"/>
        <end position="14992"/>
    </location>
</feature>
<feature type="region of interest" description="Disordered" evidence="3">
    <location>
        <begin position="82"/>
        <end position="105"/>
    </location>
</feature>
<feature type="region of interest" description="Condensation 1" evidence="1 9">
    <location>
        <begin position="140"/>
        <end position="553"/>
    </location>
</feature>
<feature type="region of interest" description="Adenylation 1" evidence="1 9">
    <location>
        <begin position="579"/>
        <end position="971"/>
    </location>
</feature>
<feature type="region of interest" description="Epimerase 1" evidence="1 9">
    <location>
        <begin position="1219"/>
        <end position="1626"/>
    </location>
</feature>
<feature type="region of interest" description="Condensation 2" evidence="1 9">
    <location>
        <begin position="1667"/>
        <end position="2097"/>
    </location>
</feature>
<feature type="region of interest" description="Adenylation 2" evidence="1 9">
    <location>
        <begin position="2122"/>
        <end position="2518"/>
    </location>
</feature>
<feature type="region of interest" description="Epimerase 2" evidence="1 9">
    <location>
        <begin position="2761"/>
        <end position="3176"/>
    </location>
</feature>
<feature type="region of interest" description="Condensation 3" evidence="1 9">
    <location>
        <begin position="3215"/>
        <end position="3640"/>
    </location>
</feature>
<feature type="region of interest" description="Adenylation 3" evidence="1 9">
    <location>
        <begin position="3669"/>
        <end position="4059"/>
    </location>
</feature>
<feature type="region of interest" description="Condensation 4" evidence="1 9">
    <location>
        <begin position="4316"/>
        <end position="4714"/>
    </location>
</feature>
<feature type="region of interest" description="Adenylation 4" evidence="1 9">
    <location>
        <begin position="4756"/>
        <end position="5149"/>
    </location>
</feature>
<feature type="region of interest" description="Condensation 5" evidence="1 9">
    <location>
        <begin position="5402"/>
        <end position="5802"/>
    </location>
</feature>
<feature type="region of interest" description="Adenylation 5" evidence="1 9">
    <location>
        <begin position="5847"/>
        <end position="6238"/>
    </location>
</feature>
<feature type="region of interest" description="Condensation 6" evidence="1 9">
    <location>
        <begin position="6494"/>
        <end position="6889"/>
    </location>
</feature>
<feature type="region of interest" description="Adenylation 6" evidence="1 9">
    <location>
        <begin position="6952"/>
        <end position="7335"/>
    </location>
</feature>
<feature type="region of interest" description="Epimerase 3" evidence="1 9">
    <location>
        <begin position="7580"/>
        <end position="7992"/>
    </location>
</feature>
<feature type="region of interest" description="Condensation 7" evidence="1 9">
    <location>
        <begin position="8034"/>
        <end position="8459"/>
    </location>
</feature>
<feature type="region of interest" description="Adenylation 7" evidence="1 9">
    <location>
        <begin position="8486"/>
        <end position="8882"/>
    </location>
</feature>
<feature type="region of interest" description="Condensation 8" evidence="1 9">
    <location>
        <begin position="9136"/>
        <end position="9535"/>
    </location>
</feature>
<feature type="region of interest" description="Adenylation 8" evidence="1 9">
    <location>
        <begin position="9583"/>
        <end position="9974"/>
    </location>
</feature>
<feature type="region of interest" description="Disordered" evidence="3">
    <location>
        <begin position="10186"/>
        <end position="10208"/>
    </location>
</feature>
<feature type="region of interest" description="Condensation 9" evidence="1 9">
    <location>
        <begin position="10240"/>
        <end position="10662"/>
    </location>
</feature>
<feature type="region of interest" description="Adenylation 9" evidence="1 9">
    <location>
        <begin position="10683"/>
        <end position="11082"/>
    </location>
</feature>
<feature type="region of interest" description="Condensation 10" evidence="1 9">
    <location>
        <begin position="11329"/>
        <end position="11725"/>
    </location>
</feature>
<feature type="region of interest" description="Adenylation 10" evidence="1 9">
    <location>
        <begin position="11770"/>
        <end position="12165"/>
    </location>
</feature>
<feature type="region of interest" description="Condensation 11" evidence="1 9">
    <location>
        <begin position="12418"/>
        <end position="12830"/>
    </location>
</feature>
<feature type="region of interest" description="Adenylation 11" evidence="1 9">
    <location>
        <begin position="12861"/>
        <end position="13249"/>
    </location>
</feature>
<feature type="region of interest" description="Epimerase 4" evidence="1 9">
    <location>
        <begin position="13476"/>
        <end position="13901"/>
    </location>
</feature>
<feature type="region of interest" description="Condensation 12" evidence="1 9">
    <location>
        <begin position="13940"/>
        <end position="14369"/>
    </location>
</feature>
<feature type="region of interest" description="Adenylation 12" evidence="1 9">
    <location>
        <begin position="14390"/>
        <end position="14789"/>
    </location>
</feature>
<feature type="region of interest" description="Condensation 13" evidence="1 9">
    <location>
        <begin position="15062"/>
        <end position="15433"/>
    </location>
</feature>
<feature type="region of interest" description="Disordered" evidence="3">
    <location>
        <begin position="15434"/>
        <end position="15511"/>
    </location>
</feature>
<feature type="region of interest" description="Disordered" evidence="3">
    <location>
        <begin position="15617"/>
        <end position="15639"/>
    </location>
</feature>
<feature type="compositionally biased region" description="Acidic residues" evidence="3">
    <location>
        <begin position="82"/>
        <end position="94"/>
    </location>
</feature>
<feature type="compositionally biased region" description="Acidic residues" evidence="3">
    <location>
        <begin position="10187"/>
        <end position="10206"/>
    </location>
</feature>
<feature type="compositionally biased region" description="Low complexity" evidence="3">
    <location>
        <begin position="15455"/>
        <end position="15472"/>
    </location>
</feature>
<feature type="compositionally biased region" description="Basic and acidic residues" evidence="3">
    <location>
        <begin position="15482"/>
        <end position="15494"/>
    </location>
</feature>
<feature type="compositionally biased region" description="Polar residues" evidence="3">
    <location>
        <begin position="15495"/>
        <end position="15511"/>
    </location>
</feature>
<feature type="modified residue" description="O-(pantetheine 4'-phosphoryl)serine" evidence="2">
    <location>
        <position position="42"/>
    </location>
</feature>
<feature type="modified residue" description="O-(pantetheine 4'-phosphoryl)serine" evidence="2">
    <location>
        <position position="1145"/>
    </location>
</feature>
<feature type="modified residue" description="O-(pantetheine 4'-phosphoryl)serine" evidence="2">
    <location>
        <position position="2691"/>
    </location>
</feature>
<feature type="modified residue" description="O-(pantetheine 4'-phosphoryl)serine" evidence="2">
    <location>
        <position position="4230"/>
    </location>
</feature>
<feature type="modified residue" description="O-(pantetheine 4'-phosphoryl)serine" evidence="2">
    <location>
        <position position="5321"/>
    </location>
</feature>
<feature type="modified residue" description="O-(pantetheine 4'-phosphoryl)serine" evidence="2">
    <location>
        <position position="6412"/>
    </location>
</feature>
<feature type="modified residue" description="O-(pantetheine 4'-phosphoryl)serine" evidence="2">
    <location>
        <position position="7507"/>
    </location>
</feature>
<feature type="modified residue" description="O-(pantetheine 4'-phosphoryl)serine" evidence="2">
    <location>
        <position position="9052"/>
    </location>
</feature>
<feature type="modified residue" description="O-(pantetheine 4'-phosphoryl)serine" evidence="2">
    <location>
        <position position="10147"/>
    </location>
</feature>
<feature type="modified residue" description="O-(pantetheine 4'-phosphoryl)serine" evidence="2">
    <location>
        <position position="11254"/>
    </location>
</feature>
<feature type="modified residue" description="O-(pantetheine 4'-phosphoryl)serine" evidence="2">
    <location>
        <position position="12335"/>
    </location>
</feature>
<feature type="modified residue" description="O-(pantetheine 4'-phosphoryl)serine" evidence="2">
    <location>
        <position position="13420"/>
    </location>
</feature>
<feature type="modified residue" description="O-(pantetheine 4'-phosphoryl)serine" evidence="2">
    <location>
        <position position="14953"/>
    </location>
</feature>
<accession>A0A0S6XHH0</accession>
<protein>
    <recommendedName>
        <fullName evidence="7">FR901469 synthetase</fullName>
        <shortName evidence="7">NRPS frbI</shortName>
        <ecNumber evidence="9">6.3.2.-</ecNumber>
    </recommendedName>
    <alternativeName>
        <fullName evidence="7">FR901469 biosynthesis cluster protein I</fullName>
    </alternativeName>
    <alternativeName>
        <fullName>Nonribosomal peptide synthetase frbI</fullName>
    </alternativeName>
</protein>
<comment type="function">
    <text evidence="6 9">Nonribosomal peptide synthetase; part of the gene cluster that mediates the biosynthesis of the antifungal antibiotic FR901469, an inhibitor of beta-1,3-glucansynthase, exerting antifungal activity against the pathogenes Candida albicans and Aspergillus fumigatus (PubMed:27660098). FR901469 is a cyclic depsipeptide containing 12 amino acid residues and a fatty acid chain (PubMed:27660098). The NRPS frbI contains 12 modules responsible for the formation of the depsipeptide backbone which is denoted as Acyl-Thr-Ala-Tyr-Val-4OHPro-Thr-Thr-3OHPro-threo3OHGln-Gly-Thr-Orn-OH (C71H116N14O23) (Probable). The PKS frbB is probably involved in the production of the hydrocarbon chain, and the acyl-CoA ligase frbC might be involved in the transport of the chain to the peptide ptoduct of frbI (Probable). Because FR901469 contains 3 hydroxylated amino acid residues, the 3 oxygenases frbA, frbH, and frbJ might be participating in amino acid hydroxylation (Probable). As no thioesterase domains were detected in frbI or frbB, the thioesterases frbD and frbE may instead release and cyclize the products of the NRPS and PKS, respectively (Probable).</text>
</comment>
<comment type="pathway">
    <text evidence="9">Antifungal biosynthesis.</text>
</comment>
<comment type="induction">
    <text evidence="6">Expression is positively regulated by the cluster-specific transcription factor frbF.</text>
</comment>
<comment type="domain">
    <text evidence="9">NRP synthetases are composed of discrete domains (adenylation (A), thiolation (T) or peptidyl carrier protein (PCP) and condensation (C) domains) which when grouped together are referred to as a single module. Each module is responsible for the recognition (via the A domain) and incorporation of a single amino acid into the growing peptide product. Thus, an NRP synthetase is generally composed of one or more modules and can terminate in a thioesterase domain (TE) that releases the newly synthesized peptide from the enzyme. Occasionally, epimerase (E) domains (responsible for L- to D-amino acid conversion) are present within the NRP synthetase. FrbI has the following architecture: T-C-A-T-E-C-A-T-E-C-A-T-C-A-T-C-A-T-C-A-T-E-C-A-T-C-A-T-C-A-T-C-A-T-C-A-T-E-C-A-T-C.</text>
</comment>
<comment type="biotechnology">
    <text evidence="4 5">FR901469 inhibits the activity of 1,3-beta-glucan synthase from Candida albicans and Aspergillus fumigatus (PubMed:11099224, PubMed:11099225). With minimal inhibitory concentrations (MICs) against Candida albicans and Aspergillus fumigatus of 0.63 ug/ml and 0.16 ug/ml, repectively, FR901469 displays greater inhibitory activity than other 1,3-beta-glucan synthase inhibitors such as, WF11899A, echinocandin B, aculeacin A, and papulacandin B (PubMed:11099224, PubMed:11099225).</text>
</comment>
<comment type="similarity">
    <text evidence="8">Belongs to the NRP synthetase family.</text>
</comment>
<reference key="1">
    <citation type="journal article" date="2015" name="Genome Announc.">
        <title>Genome sequence of fungal species No.11243, which produces the antifungal antibiotic FR901469.</title>
        <authorList>
            <person name="Matsui M."/>
            <person name="Yokoyama T."/>
            <person name="Nemoto K."/>
            <person name="Kumagai T."/>
            <person name="Terai G."/>
            <person name="Arita M."/>
            <person name="Machida M."/>
            <person name="Shibata T."/>
        </authorList>
    </citation>
    <scope>NUCLEOTIDE SEQUENCE [LARGE SCALE GENOMIC DNA]</scope>
</reference>
<reference key="2">
    <citation type="journal article" date="2000" name="J. Antibiot.">
        <title>FR901469, a novel antifungal antibiotic from an unidentified fungus No.11243. I. Taxonomy, fermentation, isolation, physico-chemical properties and biological properties.</title>
        <authorList>
            <person name="Fujie A."/>
            <person name="Iwamoto T."/>
            <person name="Muramatsu H."/>
            <person name="Okudaira T."/>
            <person name="Nitta K."/>
            <person name="Nakanishi T."/>
            <person name="Sakamoto K."/>
            <person name="Hori Y."/>
            <person name="Hino M."/>
            <person name="Hashimoto S."/>
            <person name="Okuhara M."/>
        </authorList>
    </citation>
    <scope>BIOTECHNOLOGY</scope>
</reference>
<reference key="3">
    <citation type="journal article" date="2000" name="J. Antibiot.">
        <title>FR901469, a novel antifungal antibiotic from an unidentified fungus No.11243. II. In vitro and in vivo activities.</title>
        <authorList>
            <person name="Fujie A."/>
            <person name="Iwamoto T."/>
            <person name="Muramatsu H."/>
            <person name="Okudaira T."/>
            <person name="Sato I."/>
            <person name="Furuta T."/>
            <person name="Tsurumi Y."/>
            <person name="Hori Y."/>
            <person name="Hino M."/>
            <person name="Hashimoto S."/>
            <person name="Okuhara M."/>
        </authorList>
    </citation>
    <scope>BIOTECHNOLOGY</scope>
</reference>
<reference key="4">
    <citation type="journal article" date="2017" name="J. Biosci. Bioeng.">
        <title>Identification of a putative FR901469 biosynthesis gene cluster in fungal sp. No. 11243 and enhancement of the productivity by overexpressing the transcription factor gene frbF.</title>
        <authorList>
            <person name="Matsui M."/>
            <person name="Yokoyama T."/>
            <person name="Nemoto K."/>
            <person name="Kumagai T."/>
            <person name="Terai G."/>
            <person name="Tamano K."/>
            <person name="Machida M."/>
            <person name="Shibata T."/>
        </authorList>
    </citation>
    <scope>FUNCTION</scope>
    <scope>DOMAIN</scope>
    <scope>INDUCTION</scope>
    <scope>PATHWAY</scope>
</reference>
<name>FRBI_DOTX1</name>
<proteinExistence type="evidence at protein level"/>